<protein>
    <recommendedName>
        <fullName>Probable iron chelatin transport system permease protein jhp_0822</fullName>
    </recommendedName>
</protein>
<gene>
    <name type="ordered locus">jhp_0822</name>
</gene>
<feature type="chain" id="PRO_0000060284" description="Probable iron chelatin transport system permease protein jhp_0822">
    <location>
        <begin position="1"/>
        <end position="326"/>
    </location>
</feature>
<feature type="transmembrane region" description="Helical" evidence="1">
    <location>
        <begin position="7"/>
        <end position="27"/>
    </location>
</feature>
<feature type="transmembrane region" description="Helical" evidence="1">
    <location>
        <begin position="64"/>
        <end position="84"/>
    </location>
</feature>
<feature type="transmembrane region" description="Helical" evidence="1">
    <location>
        <begin position="91"/>
        <end position="111"/>
    </location>
</feature>
<feature type="transmembrane region" description="Helical" evidence="1">
    <location>
        <begin position="113"/>
        <end position="133"/>
    </location>
</feature>
<feature type="transmembrane region" description="Helical" evidence="1">
    <location>
        <begin position="142"/>
        <end position="162"/>
    </location>
</feature>
<feature type="transmembrane region" description="Helical" evidence="1">
    <location>
        <begin position="164"/>
        <end position="184"/>
    </location>
</feature>
<feature type="transmembrane region" description="Helical" evidence="1">
    <location>
        <begin position="187"/>
        <end position="207"/>
    </location>
</feature>
<feature type="transmembrane region" description="Helical" evidence="1">
    <location>
        <begin position="241"/>
        <end position="261"/>
    </location>
</feature>
<feature type="transmembrane region" description="Helical" evidence="1">
    <location>
        <begin position="275"/>
        <end position="295"/>
    </location>
</feature>
<feature type="transmembrane region" description="Helical" evidence="1">
    <location>
        <begin position="301"/>
        <end position="321"/>
    </location>
</feature>
<proteinExistence type="inferred from homology"/>
<accession>Q9ZKW2</accession>
<name>Y889_HELPJ</name>
<comment type="function">
    <text evidence="2">Part of a binding-protein-dependent transport system for an iron chelatin; probably responsible for the translocation of the substrate across the membrane.</text>
</comment>
<comment type="subcellular location">
    <subcellularLocation>
        <location>Cell inner membrane</location>
        <topology>Multi-pass membrane protein</topology>
    </subcellularLocation>
</comment>
<comment type="similarity">
    <text evidence="2">Belongs to the binding-protein-dependent transport system permease family. FecCD subfamily.</text>
</comment>
<sequence length="326" mass="34602">MLKTYHIALACVILAVVVLLFGGESLSLEEWQEVCLNVKNHFLHNEELSSLSVIILEIRLPRVILALLVGASLSGSGVVMQTILRNPLVDPFLLGISSGAMLGVAMAIAVVESNIAILAFFGAILPSLAVLAMNRVLGNSVLSLVLSGVVLSAFLSALAGAIKFFVIPQKAQAIVVWLLGSLSLSSYKDCLIAFIGLSLGFIPLFLLRWRINLLSLSDAQSLSLGINPVLLRSLCLVCVSVASALAVSVSGTIGWIGLVIPHVARLFFGANLQKLLLSSLLMGAFFLLLADVVAKTITPYDLPVGIATSVLGAPFFLWLLFRTRGV</sequence>
<keyword id="KW-0997">Cell inner membrane</keyword>
<keyword id="KW-1003">Cell membrane</keyword>
<keyword id="KW-0406">Ion transport</keyword>
<keyword id="KW-0408">Iron</keyword>
<keyword id="KW-0410">Iron transport</keyword>
<keyword id="KW-0472">Membrane</keyword>
<keyword id="KW-0812">Transmembrane</keyword>
<keyword id="KW-1133">Transmembrane helix</keyword>
<keyword id="KW-0813">Transport</keyword>
<reference key="1">
    <citation type="journal article" date="1999" name="Nature">
        <title>Genomic sequence comparison of two unrelated isolates of the human gastric pathogen Helicobacter pylori.</title>
        <authorList>
            <person name="Alm R.A."/>
            <person name="Ling L.-S.L."/>
            <person name="Moir D.T."/>
            <person name="King B.L."/>
            <person name="Brown E.D."/>
            <person name="Doig P.C."/>
            <person name="Smith D.R."/>
            <person name="Noonan B."/>
            <person name="Guild B.C."/>
            <person name="deJonge B.L."/>
            <person name="Carmel G."/>
            <person name="Tummino P.J."/>
            <person name="Caruso A."/>
            <person name="Uria-Nickelsen M."/>
            <person name="Mills D.M."/>
            <person name="Ives C."/>
            <person name="Gibson R."/>
            <person name="Merberg D."/>
            <person name="Mills S.D."/>
            <person name="Jiang Q."/>
            <person name="Taylor D.E."/>
            <person name="Vovis G.F."/>
            <person name="Trust T.J."/>
        </authorList>
    </citation>
    <scope>NUCLEOTIDE SEQUENCE [LARGE SCALE GENOMIC DNA]</scope>
    <source>
        <strain>J99 / ATCC 700824</strain>
    </source>
</reference>
<dbReference type="EMBL" id="AE001439">
    <property type="protein sequence ID" value="AAD06394.1"/>
    <property type="molecule type" value="Genomic_DNA"/>
</dbReference>
<dbReference type="PIR" id="H71884">
    <property type="entry name" value="H71884"/>
</dbReference>
<dbReference type="RefSeq" id="WP_000921464.1">
    <property type="nucleotide sequence ID" value="NC_000921.1"/>
</dbReference>
<dbReference type="SMR" id="Q9ZKW2"/>
<dbReference type="KEGG" id="hpj:jhp_0822"/>
<dbReference type="eggNOG" id="COG0609">
    <property type="taxonomic scope" value="Bacteria"/>
</dbReference>
<dbReference type="Proteomes" id="UP000000804">
    <property type="component" value="Chromosome"/>
</dbReference>
<dbReference type="GO" id="GO:0005886">
    <property type="term" value="C:plasma membrane"/>
    <property type="evidence" value="ECO:0007669"/>
    <property type="project" value="UniProtKB-SubCell"/>
</dbReference>
<dbReference type="GO" id="GO:0022857">
    <property type="term" value="F:transmembrane transporter activity"/>
    <property type="evidence" value="ECO:0007669"/>
    <property type="project" value="InterPro"/>
</dbReference>
<dbReference type="GO" id="GO:0033214">
    <property type="term" value="P:siderophore-dependent iron import into cell"/>
    <property type="evidence" value="ECO:0007669"/>
    <property type="project" value="TreeGrafter"/>
</dbReference>
<dbReference type="CDD" id="cd06550">
    <property type="entry name" value="TM_ABC_iron-siderophores_like"/>
    <property type="match status" value="1"/>
</dbReference>
<dbReference type="FunFam" id="1.10.3470.10:FF:000001">
    <property type="entry name" value="Vitamin B12 ABC transporter permease BtuC"/>
    <property type="match status" value="1"/>
</dbReference>
<dbReference type="Gene3D" id="1.10.3470.10">
    <property type="entry name" value="ABC transporter involved in vitamin B12 uptake, BtuC"/>
    <property type="match status" value="1"/>
</dbReference>
<dbReference type="InterPro" id="IPR037294">
    <property type="entry name" value="ABC_BtuC-like"/>
</dbReference>
<dbReference type="InterPro" id="IPR000522">
    <property type="entry name" value="ABC_transptr_permease_BtuC"/>
</dbReference>
<dbReference type="PANTHER" id="PTHR30472">
    <property type="entry name" value="FERRIC ENTEROBACTIN TRANSPORT SYSTEM PERMEASE PROTEIN"/>
    <property type="match status" value="1"/>
</dbReference>
<dbReference type="PANTHER" id="PTHR30472:SF70">
    <property type="entry name" value="MOLYBDATE IMPORT SYSTEM PERMEASE PROTEIN MOLB"/>
    <property type="match status" value="1"/>
</dbReference>
<dbReference type="Pfam" id="PF01032">
    <property type="entry name" value="FecCD"/>
    <property type="match status" value="1"/>
</dbReference>
<dbReference type="SUPFAM" id="SSF81345">
    <property type="entry name" value="ABC transporter involved in vitamin B12 uptake, BtuC"/>
    <property type="match status" value="1"/>
</dbReference>
<evidence type="ECO:0000255" key="1"/>
<evidence type="ECO:0000305" key="2"/>
<organism>
    <name type="scientific">Helicobacter pylori (strain J99 / ATCC 700824)</name>
    <name type="common">Campylobacter pylori J99</name>
    <dbReference type="NCBI Taxonomy" id="85963"/>
    <lineage>
        <taxon>Bacteria</taxon>
        <taxon>Pseudomonadati</taxon>
        <taxon>Campylobacterota</taxon>
        <taxon>Epsilonproteobacteria</taxon>
        <taxon>Campylobacterales</taxon>
        <taxon>Helicobacteraceae</taxon>
        <taxon>Helicobacter</taxon>
    </lineage>
</organism>